<accession>O13419</accession>
<protein>
    <recommendedName>
        <fullName>Actin</fullName>
        <ecNumber evidence="1">3.6.4.-</ecNumber>
    </recommendedName>
</protein>
<dbReference type="EC" id="3.6.4.-" evidence="1"/>
<dbReference type="EMBL" id="AJ000335">
    <property type="protein sequence ID" value="CAA04009.1"/>
    <property type="molecule type" value="Genomic_DNA"/>
</dbReference>
<dbReference type="SMR" id="O13419"/>
<dbReference type="OMA" id="FHTTAER"/>
<dbReference type="GO" id="GO:0005737">
    <property type="term" value="C:cytoplasm"/>
    <property type="evidence" value="ECO:0007669"/>
    <property type="project" value="UniProtKB-KW"/>
</dbReference>
<dbReference type="GO" id="GO:0005856">
    <property type="term" value="C:cytoskeleton"/>
    <property type="evidence" value="ECO:0007669"/>
    <property type="project" value="UniProtKB-SubCell"/>
</dbReference>
<dbReference type="GO" id="GO:0005524">
    <property type="term" value="F:ATP binding"/>
    <property type="evidence" value="ECO:0007669"/>
    <property type="project" value="UniProtKB-KW"/>
</dbReference>
<dbReference type="GO" id="GO:0016787">
    <property type="term" value="F:hydrolase activity"/>
    <property type="evidence" value="ECO:0007669"/>
    <property type="project" value="UniProtKB-KW"/>
</dbReference>
<dbReference type="CDD" id="cd10224">
    <property type="entry name" value="ASKHA_NBD_actin"/>
    <property type="match status" value="1"/>
</dbReference>
<dbReference type="FunFam" id="3.30.420.40:FF:000131">
    <property type="entry name" value="Actin, alpha skeletal muscle"/>
    <property type="match status" value="1"/>
</dbReference>
<dbReference type="FunFam" id="3.30.420.40:FF:000291">
    <property type="entry name" value="Actin, alpha skeletal muscle"/>
    <property type="match status" value="1"/>
</dbReference>
<dbReference type="FunFam" id="3.90.640.10:FF:000001">
    <property type="entry name" value="Actin, muscle"/>
    <property type="match status" value="1"/>
</dbReference>
<dbReference type="FunFam" id="3.30.420.40:FF:000058">
    <property type="entry name" value="Putative actin-related protein 5"/>
    <property type="match status" value="1"/>
</dbReference>
<dbReference type="Gene3D" id="3.30.420.40">
    <property type="match status" value="2"/>
</dbReference>
<dbReference type="Gene3D" id="3.90.640.10">
    <property type="entry name" value="Actin, Chain A, domain 4"/>
    <property type="match status" value="1"/>
</dbReference>
<dbReference type="InterPro" id="IPR004000">
    <property type="entry name" value="Actin"/>
</dbReference>
<dbReference type="InterPro" id="IPR020902">
    <property type="entry name" value="Actin/actin-like_CS"/>
</dbReference>
<dbReference type="InterPro" id="IPR004001">
    <property type="entry name" value="Actin_CS"/>
</dbReference>
<dbReference type="InterPro" id="IPR043129">
    <property type="entry name" value="ATPase_NBD"/>
</dbReference>
<dbReference type="PANTHER" id="PTHR11937">
    <property type="entry name" value="ACTIN"/>
    <property type="match status" value="1"/>
</dbReference>
<dbReference type="Pfam" id="PF00022">
    <property type="entry name" value="Actin"/>
    <property type="match status" value="1"/>
</dbReference>
<dbReference type="PRINTS" id="PR00190">
    <property type="entry name" value="ACTIN"/>
</dbReference>
<dbReference type="SMART" id="SM00268">
    <property type="entry name" value="ACTIN"/>
    <property type="match status" value="1"/>
</dbReference>
<dbReference type="SUPFAM" id="SSF53067">
    <property type="entry name" value="Actin-like ATPase domain"/>
    <property type="match status" value="2"/>
</dbReference>
<dbReference type="PROSITE" id="PS00406">
    <property type="entry name" value="ACTINS_1"/>
    <property type="match status" value="1"/>
</dbReference>
<dbReference type="PROSITE" id="PS00432">
    <property type="entry name" value="ACTINS_2"/>
    <property type="match status" value="1"/>
</dbReference>
<dbReference type="PROSITE" id="PS01132">
    <property type="entry name" value="ACTINS_ACT_LIKE"/>
    <property type="match status" value="1"/>
</dbReference>
<keyword id="KW-0067">ATP-binding</keyword>
<keyword id="KW-0963">Cytoplasm</keyword>
<keyword id="KW-0206">Cytoskeleton</keyword>
<keyword id="KW-0378">Hydrolase</keyword>
<keyword id="KW-0547">Nucleotide-binding</keyword>
<evidence type="ECO:0000250" key="1">
    <source>
        <dbReference type="UniProtKB" id="P60010"/>
    </source>
</evidence>
<evidence type="ECO:0000305" key="2"/>
<reference key="1">
    <citation type="journal article" date="1998" name="Eur. J. Plant Pathol.">
        <title>Fungal and plant gene expression during synchronised infection of tomato leaves by Botrytis cinerea.</title>
        <authorList>
            <person name="Benito E.P."/>
            <person name="ten Have A."/>
            <person name="van 't Klooster J.W."/>
            <person name="van Kan J.A.L."/>
        </authorList>
        <dbReference type="AGRICOLA" id="IND21237902"/>
    </citation>
    <scope>NUCLEOTIDE SEQUENCE [GENOMIC DNA]</scope>
    <source>
        <strain>SAS56</strain>
    </source>
</reference>
<comment type="function">
    <text>Actins are highly conserved proteins that are involved in various types of cell motility and are ubiquitously expressed in all eukaryotic cells.</text>
</comment>
<comment type="catalytic activity">
    <reaction evidence="1">
        <text>ATP + H2O = ADP + phosphate + H(+)</text>
        <dbReference type="Rhea" id="RHEA:13065"/>
        <dbReference type="ChEBI" id="CHEBI:15377"/>
        <dbReference type="ChEBI" id="CHEBI:15378"/>
        <dbReference type="ChEBI" id="CHEBI:30616"/>
        <dbReference type="ChEBI" id="CHEBI:43474"/>
        <dbReference type="ChEBI" id="CHEBI:456216"/>
    </reaction>
</comment>
<comment type="subcellular location">
    <subcellularLocation>
        <location>Cytoplasm</location>
        <location>Cytoskeleton</location>
    </subcellularLocation>
</comment>
<comment type="similarity">
    <text evidence="2">Belongs to the actin family.</text>
</comment>
<feature type="chain" id="PRO_0000088899" description="Actin">
    <location>
        <begin position="1"/>
        <end position="375"/>
    </location>
</feature>
<name>ACT_BOTFU</name>
<proteinExistence type="inferred from homology"/>
<gene>
    <name type="primary">actA</name>
</gene>
<sequence length="375" mass="41639">MEEEVAALVIDNGSGMCKAGFAGDDAPRAVFPSIVGRPRHHGIMIGMGQKDSYVGDEAQSKRGILTLRYPIEHGVVTNWDDMEKIWHHTFYNELRVAPEEHPVLLTEAPINPKSNREKMTQIVFETFNAPAFYVSIQAVLSLYASGRTTGIVLDSGDGVTHVVPIYEGFSLPHAIARVDMAGRDLTDYLMKILAERGYTFSTTAEREIVRDIKEKLCYVALDFEQEIQTASQSSSLEKSYELPDGQVITIGNERFRAPEALFQPSVLGLESGGIHVTTFNSIMKCDVDVRKDLYGNIVMSGGTTMYPGISDRMQKEITALAPSSMKVKIIAPPERKYSVWIGGSILASLSTFQQMWISKQEYDESGPSIVHRKCF</sequence>
<organism>
    <name type="scientific">Botryotinia fuckeliana</name>
    <name type="common">Noble rot fungus</name>
    <name type="synonym">Botrytis cinerea</name>
    <dbReference type="NCBI Taxonomy" id="40559"/>
    <lineage>
        <taxon>Eukaryota</taxon>
        <taxon>Fungi</taxon>
        <taxon>Dikarya</taxon>
        <taxon>Ascomycota</taxon>
        <taxon>Pezizomycotina</taxon>
        <taxon>Leotiomycetes</taxon>
        <taxon>Helotiales</taxon>
        <taxon>Sclerotiniaceae</taxon>
        <taxon>Botrytis</taxon>
    </lineage>
</organism>